<sequence length="281" mass="31001">MIETLLPASALAFPAIDPVIFRVGPLAVHWYGLGYVVGILFAWWYGKKLLRSHRLWANNQPPMAPEALDDFVIWAALGVVLGGRIGYVLFYNFSYYISNPLAIPALWDGGMSFHGGILGTTLAMILFARSRGILVWSMFDTIAAGVPIGLGVVRVANFINSELWGRVSDVPWAVYFPNGGPLPRHPSQLYEAFLEGLVLFFVLFVLVWGARKLKQPGFVAGAFVTGYGLSRIAVEFFREPDAQIGYLFGGWLTMGMVLSVPMVLLGLWAMWRANRAAARNA</sequence>
<gene>
    <name evidence="1" type="primary">lgt</name>
    <name type="ordered locus">BAbS19_I14430</name>
</gene>
<proteinExistence type="inferred from homology"/>
<keyword id="KW-0997">Cell inner membrane</keyword>
<keyword id="KW-1003">Cell membrane</keyword>
<keyword id="KW-0472">Membrane</keyword>
<keyword id="KW-0808">Transferase</keyword>
<keyword id="KW-0812">Transmembrane</keyword>
<keyword id="KW-1133">Transmembrane helix</keyword>
<dbReference type="EC" id="2.5.1.145" evidence="1"/>
<dbReference type="EMBL" id="CP000887">
    <property type="protein sequence ID" value="ACD72936.1"/>
    <property type="molecule type" value="Genomic_DNA"/>
</dbReference>
<dbReference type="RefSeq" id="WP_002966912.1">
    <property type="nucleotide sequence ID" value="NC_010742.1"/>
</dbReference>
<dbReference type="SMR" id="B2S6Y9"/>
<dbReference type="GeneID" id="97533286"/>
<dbReference type="KEGG" id="bmc:BAbS19_I14430"/>
<dbReference type="HOGENOM" id="CLU_013386_1_0_5"/>
<dbReference type="UniPathway" id="UPA00664"/>
<dbReference type="Proteomes" id="UP000002565">
    <property type="component" value="Chromosome 1"/>
</dbReference>
<dbReference type="GO" id="GO:0005886">
    <property type="term" value="C:plasma membrane"/>
    <property type="evidence" value="ECO:0007669"/>
    <property type="project" value="UniProtKB-SubCell"/>
</dbReference>
<dbReference type="GO" id="GO:0008961">
    <property type="term" value="F:phosphatidylglycerol-prolipoprotein diacylglyceryl transferase activity"/>
    <property type="evidence" value="ECO:0007669"/>
    <property type="project" value="UniProtKB-UniRule"/>
</dbReference>
<dbReference type="GO" id="GO:0042158">
    <property type="term" value="P:lipoprotein biosynthetic process"/>
    <property type="evidence" value="ECO:0007669"/>
    <property type="project" value="UniProtKB-UniRule"/>
</dbReference>
<dbReference type="HAMAP" id="MF_01147">
    <property type="entry name" value="Lgt"/>
    <property type="match status" value="1"/>
</dbReference>
<dbReference type="InterPro" id="IPR001640">
    <property type="entry name" value="Lgt"/>
</dbReference>
<dbReference type="NCBIfam" id="TIGR00544">
    <property type="entry name" value="lgt"/>
    <property type="match status" value="1"/>
</dbReference>
<dbReference type="PANTHER" id="PTHR30589:SF0">
    <property type="entry name" value="PHOSPHATIDYLGLYCEROL--PROLIPOPROTEIN DIACYLGLYCERYL TRANSFERASE"/>
    <property type="match status" value="1"/>
</dbReference>
<dbReference type="PANTHER" id="PTHR30589">
    <property type="entry name" value="PROLIPOPROTEIN DIACYLGLYCERYL TRANSFERASE"/>
    <property type="match status" value="1"/>
</dbReference>
<dbReference type="Pfam" id="PF01790">
    <property type="entry name" value="LGT"/>
    <property type="match status" value="1"/>
</dbReference>
<feature type="chain" id="PRO_1000137406" description="Phosphatidylglycerol--prolipoprotein diacylglyceryl transferase">
    <location>
        <begin position="1"/>
        <end position="281"/>
    </location>
</feature>
<feature type="transmembrane region" description="Helical" evidence="1">
    <location>
        <begin position="23"/>
        <end position="43"/>
    </location>
</feature>
<feature type="transmembrane region" description="Helical" evidence="1">
    <location>
        <begin position="71"/>
        <end position="91"/>
    </location>
</feature>
<feature type="transmembrane region" description="Helical" evidence="1">
    <location>
        <begin position="107"/>
        <end position="127"/>
    </location>
</feature>
<feature type="transmembrane region" description="Helical" evidence="1">
    <location>
        <begin position="133"/>
        <end position="153"/>
    </location>
</feature>
<feature type="transmembrane region" description="Helical" evidence="1">
    <location>
        <begin position="189"/>
        <end position="209"/>
    </location>
</feature>
<feature type="transmembrane region" description="Helical" evidence="1">
    <location>
        <begin position="217"/>
        <end position="237"/>
    </location>
</feature>
<feature type="transmembrane region" description="Helical" evidence="1">
    <location>
        <begin position="247"/>
        <end position="267"/>
    </location>
</feature>
<feature type="binding site" evidence="1">
    <location>
        <position position="154"/>
    </location>
    <ligand>
        <name>a 1,2-diacyl-sn-glycero-3-phospho-(1'-sn-glycerol)</name>
        <dbReference type="ChEBI" id="CHEBI:64716"/>
    </ligand>
</feature>
<organism>
    <name type="scientific">Brucella abortus (strain S19)</name>
    <dbReference type="NCBI Taxonomy" id="430066"/>
    <lineage>
        <taxon>Bacteria</taxon>
        <taxon>Pseudomonadati</taxon>
        <taxon>Pseudomonadota</taxon>
        <taxon>Alphaproteobacteria</taxon>
        <taxon>Hyphomicrobiales</taxon>
        <taxon>Brucellaceae</taxon>
        <taxon>Brucella/Ochrobactrum group</taxon>
        <taxon>Brucella</taxon>
    </lineage>
</organism>
<reference key="1">
    <citation type="journal article" date="2008" name="PLoS ONE">
        <title>Genome sequence of Brucella abortus vaccine strain S19 compared to virulent strains yields candidate virulence genes.</title>
        <authorList>
            <person name="Crasta O.R."/>
            <person name="Folkerts O."/>
            <person name="Fei Z."/>
            <person name="Mane S.P."/>
            <person name="Evans C."/>
            <person name="Martino-Catt S."/>
            <person name="Bricker B."/>
            <person name="Yu G."/>
            <person name="Du L."/>
            <person name="Sobral B.W."/>
        </authorList>
    </citation>
    <scope>NUCLEOTIDE SEQUENCE [LARGE SCALE GENOMIC DNA]</scope>
    <source>
        <strain>S19</strain>
    </source>
</reference>
<comment type="function">
    <text evidence="1">Catalyzes the transfer of the diacylglyceryl group from phosphatidylglycerol to the sulfhydryl group of the N-terminal cysteine of a prolipoprotein, the first step in the formation of mature lipoproteins.</text>
</comment>
<comment type="catalytic activity">
    <reaction evidence="1">
        <text>L-cysteinyl-[prolipoprotein] + a 1,2-diacyl-sn-glycero-3-phospho-(1'-sn-glycerol) = an S-1,2-diacyl-sn-glyceryl-L-cysteinyl-[prolipoprotein] + sn-glycerol 1-phosphate + H(+)</text>
        <dbReference type="Rhea" id="RHEA:56712"/>
        <dbReference type="Rhea" id="RHEA-COMP:14679"/>
        <dbReference type="Rhea" id="RHEA-COMP:14680"/>
        <dbReference type="ChEBI" id="CHEBI:15378"/>
        <dbReference type="ChEBI" id="CHEBI:29950"/>
        <dbReference type="ChEBI" id="CHEBI:57685"/>
        <dbReference type="ChEBI" id="CHEBI:64716"/>
        <dbReference type="ChEBI" id="CHEBI:140658"/>
        <dbReference type="EC" id="2.5.1.145"/>
    </reaction>
</comment>
<comment type="pathway">
    <text evidence="1">Protein modification; lipoprotein biosynthesis (diacylglyceryl transfer).</text>
</comment>
<comment type="subcellular location">
    <subcellularLocation>
        <location evidence="1">Cell inner membrane</location>
        <topology evidence="1">Multi-pass membrane protein</topology>
    </subcellularLocation>
</comment>
<comment type="similarity">
    <text evidence="1">Belongs to the Lgt family.</text>
</comment>
<evidence type="ECO:0000255" key="1">
    <source>
        <dbReference type="HAMAP-Rule" id="MF_01147"/>
    </source>
</evidence>
<accession>B2S6Y9</accession>
<protein>
    <recommendedName>
        <fullName evidence="1">Phosphatidylglycerol--prolipoprotein diacylglyceryl transferase</fullName>
        <ecNumber evidence="1">2.5.1.145</ecNumber>
    </recommendedName>
</protein>
<name>LGT_BRUA1</name>